<accession>Q4R760</accession>
<feature type="chain" id="PRO_0000307399" description="Ropporin-1-like protein">
    <location>
        <begin position="1"/>
        <end position="230"/>
    </location>
</feature>
<feature type="domain" description="RIIa">
    <location>
        <begin position="17"/>
        <end position="54"/>
    </location>
</feature>
<evidence type="ECO:0000250" key="1">
    <source>
        <dbReference type="UniProtKB" id="Q96C74"/>
    </source>
</evidence>
<evidence type="ECO:0000250" key="2">
    <source>
        <dbReference type="UniProtKB" id="Q9EQ00"/>
    </source>
</evidence>
<evidence type="ECO:0000305" key="3"/>
<proteinExistence type="evidence at transcript level"/>
<protein>
    <recommendedName>
        <fullName>Ropporin-1-like protein</fullName>
    </recommendedName>
</protein>
<reference key="1">
    <citation type="submission" date="2005-06" db="EMBL/GenBank/DDBJ databases">
        <title>DNA sequences of macaque genes expressed in brain or testis and its evolutionary implications.</title>
        <authorList>
            <consortium name="International consortium for macaque cDNA sequencing and analysis"/>
        </authorList>
    </citation>
    <scope>NUCLEOTIDE SEQUENCE [LARGE SCALE MRNA]</scope>
    <source>
        <tissue>Testis</tissue>
    </source>
</reference>
<dbReference type="EMBL" id="AB168965">
    <property type="protein sequence ID" value="BAE01063.1"/>
    <property type="molecule type" value="mRNA"/>
</dbReference>
<dbReference type="RefSeq" id="NP_001271606.1">
    <property type="nucleotide sequence ID" value="NM_001284677.1"/>
</dbReference>
<dbReference type="SMR" id="Q4R760"/>
<dbReference type="STRING" id="9541.ENSMFAP00000045470"/>
<dbReference type="eggNOG" id="ENOG502QTNR">
    <property type="taxonomic scope" value="Eukaryota"/>
</dbReference>
<dbReference type="Proteomes" id="UP000233100">
    <property type="component" value="Unplaced"/>
</dbReference>
<dbReference type="GO" id="GO:0031514">
    <property type="term" value="C:motile cilium"/>
    <property type="evidence" value="ECO:0007669"/>
    <property type="project" value="UniProtKB-SubCell"/>
</dbReference>
<dbReference type="GO" id="GO:0001534">
    <property type="term" value="C:radial spoke"/>
    <property type="evidence" value="ECO:0000250"/>
    <property type="project" value="UniProtKB"/>
</dbReference>
<dbReference type="GO" id="GO:0030317">
    <property type="term" value="P:flagellated sperm motility"/>
    <property type="evidence" value="ECO:0000250"/>
    <property type="project" value="UniProtKB"/>
</dbReference>
<dbReference type="GO" id="GO:0001932">
    <property type="term" value="P:regulation of protein phosphorylation"/>
    <property type="evidence" value="ECO:0000250"/>
    <property type="project" value="UniProtKB"/>
</dbReference>
<dbReference type="GO" id="GO:0048240">
    <property type="term" value="P:sperm capacitation"/>
    <property type="evidence" value="ECO:0000250"/>
    <property type="project" value="UniProtKB"/>
</dbReference>
<dbReference type="CDD" id="cd23019">
    <property type="entry name" value="DD_ROP"/>
    <property type="match status" value="1"/>
</dbReference>
<dbReference type="FunFam" id="1.20.890.10:FF:000004">
    <property type="entry name" value="ropporin-1-like protein isoform X2"/>
    <property type="match status" value="1"/>
</dbReference>
<dbReference type="Gene3D" id="1.20.890.10">
    <property type="entry name" value="cAMP-dependent protein kinase regulatory subunit, dimerization-anchoring domain"/>
    <property type="match status" value="1"/>
</dbReference>
<dbReference type="InterPro" id="IPR047844">
    <property type="entry name" value="ROP_DD"/>
</dbReference>
<dbReference type="PANTHER" id="PTHR14952">
    <property type="entry name" value="ROPPORIN-1-LIKE PROTEIN"/>
    <property type="match status" value="1"/>
</dbReference>
<dbReference type="PANTHER" id="PTHR14952:SF14">
    <property type="entry name" value="ROPPORIN-1-LIKE PROTEIN"/>
    <property type="match status" value="1"/>
</dbReference>
<dbReference type="SUPFAM" id="SSF47391">
    <property type="entry name" value="Dimerization-anchoring domain of cAMP-dependent PK regulatory subunit"/>
    <property type="match status" value="1"/>
</dbReference>
<keyword id="KW-0966">Cell projection</keyword>
<keyword id="KW-0969">Cilium</keyword>
<keyword id="KW-0282">Flagellum</keyword>
<keyword id="KW-1185">Reference proteome</keyword>
<keyword id="KW-0832">Ubl conjugation</keyword>
<comment type="function">
    <text evidence="2">Functions as part of axonemal radial spoke complexes that play an important part in the motility of sperm and cilia. Important for male fertility. With ROPN1, involved in fibrous sheath integrity and sperm motility, plays a role in PKA-dependent signaling processes required for spermatozoa capacitation.</text>
</comment>
<comment type="subunit">
    <text evidence="1 2">Component of the axonemal radial spoke complex 1 (RS1), at least composed of spoke head proteins RSPH1, RSPH3, RSPH9 and the cilia-specific component RSPH4A or sperm-specific component RSPH6A, spoke stalk proteins RSPH14, DNAJB13, DYDC1, ROPN1L and NME5, and the anchor protein IQUB (By similarity). May interact with AKAP3 (By similarity). Interacts with FSCB; the interaction increases upon spermatozoa capacitation conditions (By similarity). Interacts with CFAP61 (By similarity).</text>
</comment>
<comment type="subcellular location">
    <subcellularLocation>
        <location evidence="2">Cell projection</location>
        <location evidence="2">Cilium</location>
        <location evidence="2">Flagellum</location>
    </subcellularLocation>
    <subcellularLocation>
        <location evidence="1">Cell projection</location>
        <location evidence="1">Cilium</location>
    </subcellularLocation>
</comment>
<comment type="PTM">
    <text evidence="2">Sumoylated, sumoylation decreases upon spermatozoa capacitation conditions.</text>
</comment>
<comment type="similarity">
    <text evidence="3">Belongs to the ropporin family.</text>
</comment>
<gene>
    <name type="primary">ROPN1L</name>
    <name type="ORF">QtsA-16243</name>
</gene>
<organism>
    <name type="scientific">Macaca fascicularis</name>
    <name type="common">Crab-eating macaque</name>
    <name type="synonym">Cynomolgus monkey</name>
    <dbReference type="NCBI Taxonomy" id="9541"/>
    <lineage>
        <taxon>Eukaryota</taxon>
        <taxon>Metazoa</taxon>
        <taxon>Chordata</taxon>
        <taxon>Craniata</taxon>
        <taxon>Vertebrata</taxon>
        <taxon>Euteleostomi</taxon>
        <taxon>Mammalia</taxon>
        <taxon>Eutheria</taxon>
        <taxon>Euarchontoglires</taxon>
        <taxon>Primates</taxon>
        <taxon>Haplorrhini</taxon>
        <taxon>Catarrhini</taxon>
        <taxon>Cercopithecidae</taxon>
        <taxon>Cercopithecinae</taxon>
        <taxon>Macaca</taxon>
    </lineage>
</organism>
<sequence>MPLPDTMFCAQQIHIPPELPDILKQFTKAAIRTQPADVLQWSAGYFSALSRGDPLPVKDRMEMPTATQKTDTGLTPGLLKVLHKQCHHKQYVELTDLEQKWKNLCLPKEKFKALLQLDPCENRIKWINFLALGCSMLGGSLNTALKHLCEILTDDPEGGPARIPFKTFSYVYRYLANLDSDVSSSETESYLASLKENIDTRRNGMIGLSDFFFPKRNLLENRENSEDVGH</sequence>
<name>ROP1L_MACFA</name>